<sequence>MNLSSLRPAKGSVRNKKRVGRGQGSGNGTTAGKGNKGQQARSGYKRPIIEGGQVPVYRRLPKFGFTSRSRKTITTINLLQIEQWLEQGVVSNELTVQDFKTLLHASNTDYFKVLGAGEVTQPITITAHFFSKSAEEKIAAAGGKTIIAFRTLAEAVNIKGLPIEEALLKEKVKLVKVKKAKPTA</sequence>
<comment type="function">
    <text evidence="1">Binds to the 23S rRNA.</text>
</comment>
<comment type="subunit">
    <text evidence="1">Part of the 50S ribosomal subunit.</text>
</comment>
<comment type="similarity">
    <text evidence="1">Belongs to the universal ribosomal protein uL15 family.</text>
</comment>
<organism>
    <name type="scientific">Chlorobium chlorochromatii (strain CaD3)</name>
    <dbReference type="NCBI Taxonomy" id="340177"/>
    <lineage>
        <taxon>Bacteria</taxon>
        <taxon>Pseudomonadati</taxon>
        <taxon>Chlorobiota</taxon>
        <taxon>Chlorobiia</taxon>
        <taxon>Chlorobiales</taxon>
        <taxon>Chlorobiaceae</taxon>
        <taxon>Chlorobium/Pelodictyon group</taxon>
        <taxon>Chlorobium</taxon>
    </lineage>
</organism>
<proteinExistence type="inferred from homology"/>
<keyword id="KW-0687">Ribonucleoprotein</keyword>
<keyword id="KW-0689">Ribosomal protein</keyword>
<keyword id="KW-0694">RNA-binding</keyword>
<keyword id="KW-0699">rRNA-binding</keyword>
<dbReference type="EMBL" id="CP000108">
    <property type="protein sequence ID" value="ABB29083.1"/>
    <property type="molecule type" value="Genomic_DNA"/>
</dbReference>
<dbReference type="SMR" id="Q3APJ2"/>
<dbReference type="STRING" id="340177.Cag_1832"/>
<dbReference type="KEGG" id="cch:Cag_1832"/>
<dbReference type="eggNOG" id="COG0200">
    <property type="taxonomic scope" value="Bacteria"/>
</dbReference>
<dbReference type="HOGENOM" id="CLU_055188_4_0_10"/>
<dbReference type="OrthoDB" id="9810293at2"/>
<dbReference type="GO" id="GO:0022625">
    <property type="term" value="C:cytosolic large ribosomal subunit"/>
    <property type="evidence" value="ECO:0007669"/>
    <property type="project" value="TreeGrafter"/>
</dbReference>
<dbReference type="GO" id="GO:0019843">
    <property type="term" value="F:rRNA binding"/>
    <property type="evidence" value="ECO:0007669"/>
    <property type="project" value="UniProtKB-UniRule"/>
</dbReference>
<dbReference type="GO" id="GO:0003735">
    <property type="term" value="F:structural constituent of ribosome"/>
    <property type="evidence" value="ECO:0007669"/>
    <property type="project" value="InterPro"/>
</dbReference>
<dbReference type="GO" id="GO:0006412">
    <property type="term" value="P:translation"/>
    <property type="evidence" value="ECO:0007669"/>
    <property type="project" value="UniProtKB-UniRule"/>
</dbReference>
<dbReference type="Gene3D" id="3.100.10.10">
    <property type="match status" value="1"/>
</dbReference>
<dbReference type="HAMAP" id="MF_01341">
    <property type="entry name" value="Ribosomal_uL15"/>
    <property type="match status" value="1"/>
</dbReference>
<dbReference type="InterPro" id="IPR030878">
    <property type="entry name" value="Ribosomal_uL15"/>
</dbReference>
<dbReference type="InterPro" id="IPR021131">
    <property type="entry name" value="Ribosomal_uL15/eL18"/>
</dbReference>
<dbReference type="InterPro" id="IPR036227">
    <property type="entry name" value="Ribosomal_uL15/eL18_sf"/>
</dbReference>
<dbReference type="InterPro" id="IPR005749">
    <property type="entry name" value="Ribosomal_uL15_bac-type"/>
</dbReference>
<dbReference type="InterPro" id="IPR001196">
    <property type="entry name" value="Ribosomal_uL15_CS"/>
</dbReference>
<dbReference type="NCBIfam" id="TIGR01071">
    <property type="entry name" value="rplO_bact"/>
    <property type="match status" value="1"/>
</dbReference>
<dbReference type="PANTHER" id="PTHR12934">
    <property type="entry name" value="50S RIBOSOMAL PROTEIN L15"/>
    <property type="match status" value="1"/>
</dbReference>
<dbReference type="PANTHER" id="PTHR12934:SF11">
    <property type="entry name" value="LARGE RIBOSOMAL SUBUNIT PROTEIN UL15M"/>
    <property type="match status" value="1"/>
</dbReference>
<dbReference type="Pfam" id="PF00828">
    <property type="entry name" value="Ribosomal_L27A"/>
    <property type="match status" value="1"/>
</dbReference>
<dbReference type="SUPFAM" id="SSF52080">
    <property type="entry name" value="Ribosomal proteins L15p and L18e"/>
    <property type="match status" value="1"/>
</dbReference>
<dbReference type="PROSITE" id="PS00475">
    <property type="entry name" value="RIBOSOMAL_L15"/>
    <property type="match status" value="1"/>
</dbReference>
<reference key="1">
    <citation type="submission" date="2005-08" db="EMBL/GenBank/DDBJ databases">
        <title>Complete sequence of Chlorobium chlorochromatii CaD3.</title>
        <authorList>
            <consortium name="US DOE Joint Genome Institute"/>
            <person name="Copeland A."/>
            <person name="Lucas S."/>
            <person name="Lapidus A."/>
            <person name="Barry K."/>
            <person name="Detter J.C."/>
            <person name="Glavina T."/>
            <person name="Hammon N."/>
            <person name="Israni S."/>
            <person name="Pitluck S."/>
            <person name="Bryant D."/>
            <person name="Schmutz J."/>
            <person name="Larimer F."/>
            <person name="Land M."/>
            <person name="Kyrpides N."/>
            <person name="Ivanova N."/>
            <person name="Richardson P."/>
        </authorList>
    </citation>
    <scope>NUCLEOTIDE SEQUENCE [LARGE SCALE GENOMIC DNA]</scope>
    <source>
        <strain>CaD3</strain>
    </source>
</reference>
<gene>
    <name evidence="1" type="primary">rplO</name>
    <name type="ordered locus">Cag_1832</name>
</gene>
<evidence type="ECO:0000255" key="1">
    <source>
        <dbReference type="HAMAP-Rule" id="MF_01341"/>
    </source>
</evidence>
<evidence type="ECO:0000256" key="2">
    <source>
        <dbReference type="SAM" id="MobiDB-lite"/>
    </source>
</evidence>
<evidence type="ECO:0000305" key="3"/>
<accession>Q3APJ2</accession>
<name>RL15_CHLCH</name>
<protein>
    <recommendedName>
        <fullName evidence="1">Large ribosomal subunit protein uL15</fullName>
    </recommendedName>
    <alternativeName>
        <fullName evidence="3">50S ribosomal protein L15</fullName>
    </alternativeName>
</protein>
<feature type="chain" id="PRO_0000251503" description="Large ribosomal subunit protein uL15">
    <location>
        <begin position="1"/>
        <end position="184"/>
    </location>
</feature>
<feature type="region of interest" description="Disordered" evidence="2">
    <location>
        <begin position="1"/>
        <end position="45"/>
    </location>
</feature>
<feature type="compositionally biased region" description="Gly residues" evidence="2">
    <location>
        <begin position="21"/>
        <end position="35"/>
    </location>
</feature>